<feature type="chain" id="PRO_0000103348" description="DNA polymerase III subunit alpha">
    <location>
        <begin position="1"/>
        <end position="1179"/>
    </location>
</feature>
<feature type="region of interest" description="Disordered" evidence="2">
    <location>
        <begin position="77"/>
        <end position="99"/>
    </location>
</feature>
<feature type="sequence variant" description="In mutant TS-38.">
    <original>E</original>
    <variation>K</variation>
    <location>
        <position position="802"/>
    </location>
</feature>
<dbReference type="EC" id="2.7.7.7"/>
<dbReference type="EMBL" id="AF108191">
    <property type="protein sequence ID" value="AAD16978.1"/>
    <property type="molecule type" value="Genomic_DNA"/>
</dbReference>
<dbReference type="EMBL" id="AL939111">
    <property type="protein sequence ID" value="CAB51456.1"/>
    <property type="molecule type" value="Genomic_DNA"/>
</dbReference>
<dbReference type="PIR" id="T35093">
    <property type="entry name" value="T35093"/>
</dbReference>
<dbReference type="RefSeq" id="NP_626324.1">
    <property type="nucleotide sequence ID" value="NC_003888.3"/>
</dbReference>
<dbReference type="RefSeq" id="WP_003976751.1">
    <property type="nucleotide sequence ID" value="NZ_VNID01000001.1"/>
</dbReference>
<dbReference type="SMR" id="Q9Z618"/>
<dbReference type="FunCoup" id="Q9Z618">
    <property type="interactions" value="46"/>
</dbReference>
<dbReference type="STRING" id="100226.gene:17759662"/>
<dbReference type="PaxDb" id="100226-SCO2064"/>
<dbReference type="GeneID" id="91386942"/>
<dbReference type="KEGG" id="sco:SCO2064"/>
<dbReference type="PATRIC" id="fig|100226.15.peg.2096"/>
<dbReference type="eggNOG" id="COG0587">
    <property type="taxonomic scope" value="Bacteria"/>
</dbReference>
<dbReference type="HOGENOM" id="CLU_001600_0_0_11"/>
<dbReference type="InParanoid" id="Q9Z618"/>
<dbReference type="OrthoDB" id="9803237at2"/>
<dbReference type="PhylomeDB" id="Q9Z618"/>
<dbReference type="Proteomes" id="UP000001973">
    <property type="component" value="Chromosome"/>
</dbReference>
<dbReference type="GO" id="GO:0005737">
    <property type="term" value="C:cytoplasm"/>
    <property type="evidence" value="ECO:0007669"/>
    <property type="project" value="UniProtKB-SubCell"/>
</dbReference>
<dbReference type="GO" id="GO:0008408">
    <property type="term" value="F:3'-5' exonuclease activity"/>
    <property type="evidence" value="ECO:0007669"/>
    <property type="project" value="InterPro"/>
</dbReference>
<dbReference type="GO" id="GO:0003887">
    <property type="term" value="F:DNA-directed DNA polymerase activity"/>
    <property type="evidence" value="ECO:0000318"/>
    <property type="project" value="GO_Central"/>
</dbReference>
<dbReference type="GO" id="GO:0003676">
    <property type="term" value="F:nucleic acid binding"/>
    <property type="evidence" value="ECO:0007669"/>
    <property type="project" value="InterPro"/>
</dbReference>
<dbReference type="GO" id="GO:0006260">
    <property type="term" value="P:DNA replication"/>
    <property type="evidence" value="ECO:0007669"/>
    <property type="project" value="UniProtKB-KW"/>
</dbReference>
<dbReference type="CDD" id="cd04485">
    <property type="entry name" value="DnaE_OBF"/>
    <property type="match status" value="1"/>
</dbReference>
<dbReference type="CDD" id="cd12113">
    <property type="entry name" value="PHP_PolIIIA_DnaE3"/>
    <property type="match status" value="1"/>
</dbReference>
<dbReference type="Gene3D" id="1.10.150.870">
    <property type="match status" value="1"/>
</dbReference>
<dbReference type="Gene3D" id="1.10.10.1600">
    <property type="entry name" value="Bacterial DNA polymerase III alpha subunit, thumb domain"/>
    <property type="match status" value="1"/>
</dbReference>
<dbReference type="Gene3D" id="3.20.20.140">
    <property type="entry name" value="Metal-dependent hydrolases"/>
    <property type="match status" value="1"/>
</dbReference>
<dbReference type="InterPro" id="IPR011708">
    <property type="entry name" value="DNA_pol3_alpha_NTPase_dom"/>
</dbReference>
<dbReference type="InterPro" id="IPR041931">
    <property type="entry name" value="DNA_pol3_alpha_thumb_dom"/>
</dbReference>
<dbReference type="InterPro" id="IPR040982">
    <property type="entry name" value="DNA_pol3_finger"/>
</dbReference>
<dbReference type="InterPro" id="IPR004805">
    <property type="entry name" value="DnaE2/DnaE/PolC"/>
</dbReference>
<dbReference type="InterPro" id="IPR029460">
    <property type="entry name" value="DNAPol_HHH"/>
</dbReference>
<dbReference type="InterPro" id="IPR004365">
    <property type="entry name" value="NA-bd_OB_tRNA"/>
</dbReference>
<dbReference type="InterPro" id="IPR004013">
    <property type="entry name" value="PHP_dom"/>
</dbReference>
<dbReference type="InterPro" id="IPR003141">
    <property type="entry name" value="Pol/His_phosphatase_N"/>
</dbReference>
<dbReference type="InterPro" id="IPR016195">
    <property type="entry name" value="Pol/histidinol_Pase-like"/>
</dbReference>
<dbReference type="NCBIfam" id="TIGR00594">
    <property type="entry name" value="polc"/>
    <property type="match status" value="1"/>
</dbReference>
<dbReference type="NCBIfam" id="NF004226">
    <property type="entry name" value="PRK05673.1"/>
    <property type="match status" value="1"/>
</dbReference>
<dbReference type="PANTHER" id="PTHR32294">
    <property type="entry name" value="DNA POLYMERASE III SUBUNIT ALPHA"/>
    <property type="match status" value="1"/>
</dbReference>
<dbReference type="PANTHER" id="PTHR32294:SF0">
    <property type="entry name" value="DNA POLYMERASE III SUBUNIT ALPHA"/>
    <property type="match status" value="1"/>
</dbReference>
<dbReference type="Pfam" id="PF07733">
    <property type="entry name" value="DNA_pol3_alpha"/>
    <property type="match status" value="1"/>
</dbReference>
<dbReference type="Pfam" id="PF17657">
    <property type="entry name" value="DNA_pol3_finger"/>
    <property type="match status" value="1"/>
</dbReference>
<dbReference type="Pfam" id="PF14579">
    <property type="entry name" value="HHH_6"/>
    <property type="match status" value="1"/>
</dbReference>
<dbReference type="Pfam" id="PF02811">
    <property type="entry name" value="PHP"/>
    <property type="match status" value="1"/>
</dbReference>
<dbReference type="Pfam" id="PF01336">
    <property type="entry name" value="tRNA_anti-codon"/>
    <property type="match status" value="1"/>
</dbReference>
<dbReference type="SMART" id="SM00481">
    <property type="entry name" value="POLIIIAc"/>
    <property type="match status" value="1"/>
</dbReference>
<dbReference type="SUPFAM" id="SSF89550">
    <property type="entry name" value="PHP domain-like"/>
    <property type="match status" value="1"/>
</dbReference>
<accession>Q9Z618</accession>
<reference key="1">
    <citation type="journal article" date="1999" name="Mol. Microbiol.">
        <title>A 'Gram-negative-type' DNA polymerase III is essential for replication of the linear chromosome of Streptomyces coelicolor A3(2).</title>
        <authorList>
            <person name="Flett F."/>
            <person name="Jungmann-Campello D."/>
            <person name="Mersinias V."/>
            <person name="Koh S.L.-M."/>
            <person name="Godden R."/>
            <person name="Smith C.P."/>
        </authorList>
    </citation>
    <scope>NUCLEOTIDE SEQUENCE [GENOMIC DNA]</scope>
    <source>
        <strain>ATCC BAA-471 / A3(2) / M145</strain>
    </source>
</reference>
<reference key="2">
    <citation type="journal article" date="2002" name="Nature">
        <title>Complete genome sequence of the model actinomycete Streptomyces coelicolor A3(2).</title>
        <authorList>
            <person name="Bentley S.D."/>
            <person name="Chater K.F."/>
            <person name="Cerdeno-Tarraga A.-M."/>
            <person name="Challis G.L."/>
            <person name="Thomson N.R."/>
            <person name="James K.D."/>
            <person name="Harris D.E."/>
            <person name="Quail M.A."/>
            <person name="Kieser H."/>
            <person name="Harper D."/>
            <person name="Bateman A."/>
            <person name="Brown S."/>
            <person name="Chandra G."/>
            <person name="Chen C.W."/>
            <person name="Collins M."/>
            <person name="Cronin A."/>
            <person name="Fraser A."/>
            <person name="Goble A."/>
            <person name="Hidalgo J."/>
            <person name="Hornsby T."/>
            <person name="Howarth S."/>
            <person name="Huang C.-H."/>
            <person name="Kieser T."/>
            <person name="Larke L."/>
            <person name="Murphy L.D."/>
            <person name="Oliver K."/>
            <person name="O'Neil S."/>
            <person name="Rabbinowitsch E."/>
            <person name="Rajandream M.A."/>
            <person name="Rutherford K.M."/>
            <person name="Rutter S."/>
            <person name="Seeger K."/>
            <person name="Saunders D."/>
            <person name="Sharp S."/>
            <person name="Squares R."/>
            <person name="Squares S."/>
            <person name="Taylor K."/>
            <person name="Warren T."/>
            <person name="Wietzorrek A."/>
            <person name="Woodward J.R."/>
            <person name="Barrell B.G."/>
            <person name="Parkhill J."/>
            <person name="Hopwood D.A."/>
        </authorList>
    </citation>
    <scope>NUCLEOTIDE SEQUENCE [LARGE SCALE GENOMIC DNA]</scope>
    <source>
        <strain>ATCC BAA-471 / A3(2) / M145</strain>
    </source>
</reference>
<protein>
    <recommendedName>
        <fullName>DNA polymerase III subunit alpha</fullName>
        <ecNumber>2.7.7.7</ecNumber>
    </recommendedName>
</protein>
<gene>
    <name type="primary">dnaE</name>
    <name type="ordered locus">SCO2064</name>
    <name type="ORF">SC4G6.33c</name>
</gene>
<comment type="function">
    <text evidence="1">DNA polymerase III is a complex, multichain enzyme responsible for most of the replicative synthesis in bacteria. This DNA polymerase also exhibits 3' to 5' exonuclease activity. The alpha chain is the DNA polymerase (By similarity).</text>
</comment>
<comment type="catalytic activity">
    <reaction>
        <text>DNA(n) + a 2'-deoxyribonucleoside 5'-triphosphate = DNA(n+1) + diphosphate</text>
        <dbReference type="Rhea" id="RHEA:22508"/>
        <dbReference type="Rhea" id="RHEA-COMP:17339"/>
        <dbReference type="Rhea" id="RHEA-COMP:17340"/>
        <dbReference type="ChEBI" id="CHEBI:33019"/>
        <dbReference type="ChEBI" id="CHEBI:61560"/>
        <dbReference type="ChEBI" id="CHEBI:173112"/>
        <dbReference type="EC" id="2.7.7.7"/>
    </reaction>
</comment>
<comment type="subunit">
    <text evidence="1">DNA polymerase III contains a core (composed of alpha, epsilon and theta chains) that associates with a tau subunit. This core dimerizes to form the PolIII' complex. PolIII' associates with the gamma complex (composed of gamma, delta, delta', psi and chi chains) and with the beta chain to form the complete DNA polymerase III complex (By similarity).</text>
</comment>
<comment type="subcellular location">
    <subcellularLocation>
        <location evidence="1">Cytoplasm</location>
    </subcellularLocation>
</comment>
<comment type="similarity">
    <text evidence="3">Belongs to the DNA polymerase type-C family. DnaE subfamily.</text>
</comment>
<keyword id="KW-0963">Cytoplasm</keyword>
<keyword id="KW-0235">DNA replication</keyword>
<keyword id="KW-0239">DNA-directed DNA polymerase</keyword>
<keyword id="KW-0548">Nucleotidyltransferase</keyword>
<keyword id="KW-1185">Reference proteome</keyword>
<keyword id="KW-0808">Transferase</keyword>
<organism>
    <name type="scientific">Streptomyces coelicolor (strain ATCC BAA-471 / A3(2) / M145)</name>
    <dbReference type="NCBI Taxonomy" id="100226"/>
    <lineage>
        <taxon>Bacteria</taxon>
        <taxon>Bacillati</taxon>
        <taxon>Actinomycetota</taxon>
        <taxon>Actinomycetes</taxon>
        <taxon>Kitasatosporales</taxon>
        <taxon>Streptomycetaceae</taxon>
        <taxon>Streptomyces</taxon>
        <taxon>Streptomyces albidoflavus group</taxon>
    </lineage>
</organism>
<proteinExistence type="inferred from homology"/>
<sequence length="1179" mass="130796">MSKPPFTHLHVHTQYSLLDGAARLKDMFDACNEMGMSHIAMSDHGNLHGAYDFFHSAKKAGVTPIIGIEAYVAPESRRNKRKIQWGQPHQKRDDVSGSGGYTHKTMWATNSKGLHNLFRLSSDAYAEGWLQKWPRMDKETISQWSEGIVASTGCPSGEVQTRLRLGHFDEALKAAADYQDIFGKDRYFLELMDHGIEIEHRVRDGLLEIGRKLGIPPLVTNDSHYTYAHEATAHDALLCIQTGKNLSDPDRFRFDGTGYYLKSTDEMYAIDSSDAWQEGCANTRLIAEMIDTTGMFEKRDLMPKFDIPEGFTEITWFQEEVRRGMERRFPGGVPEDRQKQAEYEMDVIIQMGFPGYFLVVADFIMWAKNQGIAVGPGRGSAAGSIVAYAMGITDLDPIPHGLIFERFLNPERVSMPDVDIDFDERRRVEVIRYVTEKYGADKVAMIGTYGKIKAKNAIKDSARVLGYPYAMGDRLTKAMPADVLGKGIDLNGITDPTHPRYSEAGEIRSMYESEPDVKKVIDTAKGVEGLVRQMGVHAAGVIMSSEPIVDHAPIWVRHTDGVTITQWDYPQCESLGLLKMDFLGLRNLTIMDDAVKMVKSNKGIDLDLLSLPLDDPTTFELLQRGDTLGVFQFDGGPMRSLLRLMKPDNFEDISAVSALYRPGPMGMDSHTNYALRKNGLQEITPIHKELEEPLQEVLAVTYGLIVYQEQVQKAAQIIAGYSLGEADILRRVMGKKKPDELAKNFVLFQAGARKNGYSDEAIQALWDVLVPFAGYAFNKAHSAAYGLVSYWTGYLKANYPAEYMAALLTSVKDDKDKSAVYLNECRRMGIKVLPPNVNESMSNFAAQGDDVILFGLSAVRNVGTNVVESIIKCRKAKGKYASFPDYLDKVEAVVCNKRTTESLIKAGAFDEMGHTRKGLTAQYEPMIDNVVAVKRKEAEGQFDLFGGMGDEQSDEPGFGLDVVFGEDEWDKTYLLAQEREMLGLYVSDHPLFGLEHVLSDKADAGISQLTGGDFGDGAVVTIGGIISGLQRKMTKQGNAWAIATVEDLAGSLECMFFPATYQLVSTQLVEDAVVFVKGRLDKREDVPRLVAMELMIPDLSNAGTNAPVVLTIPATRITPPMVSRLGEILTHHRGDSEVRIKLQGPTKTTVLRLDRHRVKPDPALFGDLKVLLGPSCLAG</sequence>
<name>DPO3A_STRCO</name>
<evidence type="ECO:0000250" key="1"/>
<evidence type="ECO:0000256" key="2">
    <source>
        <dbReference type="SAM" id="MobiDB-lite"/>
    </source>
</evidence>
<evidence type="ECO:0000305" key="3"/>